<feature type="chain" id="PRO_1000118521" description="tRNA dimethylallyltransferase">
    <location>
        <begin position="1"/>
        <end position="304"/>
    </location>
</feature>
<feature type="binding site" evidence="1">
    <location>
        <begin position="9"/>
        <end position="16"/>
    </location>
    <ligand>
        <name>ATP</name>
        <dbReference type="ChEBI" id="CHEBI:30616"/>
    </ligand>
</feature>
<feature type="binding site" evidence="1">
    <location>
        <begin position="11"/>
        <end position="16"/>
    </location>
    <ligand>
        <name>substrate</name>
    </ligand>
</feature>
<feature type="site" description="Interaction with substrate tRNA" evidence="1">
    <location>
        <position position="100"/>
    </location>
</feature>
<feature type="site" description="Interaction with substrate tRNA" evidence="1">
    <location>
        <position position="122"/>
    </location>
</feature>
<comment type="function">
    <text evidence="1">Catalyzes the transfer of a dimethylallyl group onto the adenine at position 37 in tRNAs that read codons beginning with uridine, leading to the formation of N6-(dimethylallyl)adenosine (i(6)A).</text>
</comment>
<comment type="catalytic activity">
    <reaction evidence="1">
        <text>adenosine(37) in tRNA + dimethylallyl diphosphate = N(6)-dimethylallyladenosine(37) in tRNA + diphosphate</text>
        <dbReference type="Rhea" id="RHEA:26482"/>
        <dbReference type="Rhea" id="RHEA-COMP:10162"/>
        <dbReference type="Rhea" id="RHEA-COMP:10375"/>
        <dbReference type="ChEBI" id="CHEBI:33019"/>
        <dbReference type="ChEBI" id="CHEBI:57623"/>
        <dbReference type="ChEBI" id="CHEBI:74411"/>
        <dbReference type="ChEBI" id="CHEBI:74415"/>
        <dbReference type="EC" id="2.5.1.75"/>
    </reaction>
</comment>
<comment type="cofactor">
    <cofactor evidence="1">
        <name>Mg(2+)</name>
        <dbReference type="ChEBI" id="CHEBI:18420"/>
    </cofactor>
</comment>
<comment type="subunit">
    <text evidence="1">Monomer.</text>
</comment>
<comment type="similarity">
    <text evidence="1">Belongs to the IPP transferase family.</text>
</comment>
<organism>
    <name type="scientific">Deinococcus geothermalis (strain DSM 11300 / CIP 105573 / AG-3a)</name>
    <dbReference type="NCBI Taxonomy" id="319795"/>
    <lineage>
        <taxon>Bacteria</taxon>
        <taxon>Thermotogati</taxon>
        <taxon>Deinococcota</taxon>
        <taxon>Deinococci</taxon>
        <taxon>Deinococcales</taxon>
        <taxon>Deinococcaceae</taxon>
        <taxon>Deinococcus</taxon>
    </lineage>
</organism>
<name>MIAA_DEIGD</name>
<keyword id="KW-0067">ATP-binding</keyword>
<keyword id="KW-0460">Magnesium</keyword>
<keyword id="KW-0547">Nucleotide-binding</keyword>
<keyword id="KW-0808">Transferase</keyword>
<keyword id="KW-0819">tRNA processing</keyword>
<gene>
    <name evidence="1" type="primary">miaA</name>
    <name type="ordered locus">Dgeo_0860</name>
</gene>
<protein>
    <recommendedName>
        <fullName evidence="1">tRNA dimethylallyltransferase</fullName>
        <ecNumber evidence="1">2.5.1.75</ecNumber>
    </recommendedName>
    <alternativeName>
        <fullName evidence="1">Dimethylallyl diphosphate:tRNA dimethylallyltransferase</fullName>
        <shortName evidence="1">DMAPP:tRNA dimethylallyltransferase</shortName>
        <shortName evidence="1">DMATase</shortName>
    </alternativeName>
    <alternativeName>
        <fullName evidence="1">Isopentenyl-diphosphate:tRNA isopentenyltransferase</fullName>
        <shortName evidence="1">IPP transferase</shortName>
        <shortName evidence="1">IPPT</shortName>
        <shortName evidence="1">IPTase</shortName>
    </alternativeName>
</protein>
<evidence type="ECO:0000255" key="1">
    <source>
        <dbReference type="HAMAP-Rule" id="MF_00185"/>
    </source>
</evidence>
<sequence>MPPVPLLTAPTAAGKSALALALGRQFGLEVIAADAFTVYRGLDIGTAKPTPAERAQVPHHLLDVVDVTEDYDVARYTRAAESAIADVLARGRVPLVVGGTGFYLSALVRGLPLTPPADPQMRAEVEADLAARGLDALLAEVAAANPAEAVRLERNPRRVVRALEVYRRTGRFPGEFGYRPPAFRYRMFAFTHPWPELEARVAARTRTMLAQGWPEEAAWLAQQVAPDQEPRPTVWQALGYREALAVHAGTLDPEAAARQITLATRQYAKRQLTWVRTQLGTSPVTPSQAAEALVAFLSGGGLSA</sequence>
<proteinExistence type="inferred from homology"/>
<dbReference type="EC" id="2.5.1.75" evidence="1"/>
<dbReference type="EMBL" id="CP000359">
    <property type="protein sequence ID" value="ABF45162.1"/>
    <property type="molecule type" value="Genomic_DNA"/>
</dbReference>
<dbReference type="RefSeq" id="WP_011530000.1">
    <property type="nucleotide sequence ID" value="NC_008025.1"/>
</dbReference>
<dbReference type="SMR" id="Q1J022"/>
<dbReference type="STRING" id="319795.Dgeo_0860"/>
<dbReference type="KEGG" id="dge:Dgeo_0860"/>
<dbReference type="eggNOG" id="COG0324">
    <property type="taxonomic scope" value="Bacteria"/>
</dbReference>
<dbReference type="HOGENOM" id="CLU_032616_0_1_0"/>
<dbReference type="Proteomes" id="UP000002431">
    <property type="component" value="Chromosome"/>
</dbReference>
<dbReference type="GO" id="GO:0005524">
    <property type="term" value="F:ATP binding"/>
    <property type="evidence" value="ECO:0007669"/>
    <property type="project" value="UniProtKB-UniRule"/>
</dbReference>
<dbReference type="GO" id="GO:0052381">
    <property type="term" value="F:tRNA dimethylallyltransferase activity"/>
    <property type="evidence" value="ECO:0007669"/>
    <property type="project" value="UniProtKB-UniRule"/>
</dbReference>
<dbReference type="GO" id="GO:0006400">
    <property type="term" value="P:tRNA modification"/>
    <property type="evidence" value="ECO:0007669"/>
    <property type="project" value="TreeGrafter"/>
</dbReference>
<dbReference type="Gene3D" id="1.10.20.140">
    <property type="match status" value="1"/>
</dbReference>
<dbReference type="Gene3D" id="3.40.50.300">
    <property type="entry name" value="P-loop containing nucleotide triphosphate hydrolases"/>
    <property type="match status" value="1"/>
</dbReference>
<dbReference type="HAMAP" id="MF_00185">
    <property type="entry name" value="IPP_trans"/>
    <property type="match status" value="1"/>
</dbReference>
<dbReference type="InterPro" id="IPR039657">
    <property type="entry name" value="Dimethylallyltransferase"/>
</dbReference>
<dbReference type="InterPro" id="IPR018022">
    <property type="entry name" value="IPT"/>
</dbReference>
<dbReference type="InterPro" id="IPR027417">
    <property type="entry name" value="P-loop_NTPase"/>
</dbReference>
<dbReference type="NCBIfam" id="TIGR00174">
    <property type="entry name" value="miaA"/>
    <property type="match status" value="1"/>
</dbReference>
<dbReference type="PANTHER" id="PTHR11088">
    <property type="entry name" value="TRNA DIMETHYLALLYLTRANSFERASE"/>
    <property type="match status" value="1"/>
</dbReference>
<dbReference type="PANTHER" id="PTHR11088:SF60">
    <property type="entry name" value="TRNA DIMETHYLALLYLTRANSFERASE"/>
    <property type="match status" value="1"/>
</dbReference>
<dbReference type="Pfam" id="PF01715">
    <property type="entry name" value="IPPT"/>
    <property type="match status" value="1"/>
</dbReference>
<dbReference type="SUPFAM" id="SSF52540">
    <property type="entry name" value="P-loop containing nucleoside triphosphate hydrolases"/>
    <property type="match status" value="1"/>
</dbReference>
<accession>Q1J022</accession>
<reference key="1">
    <citation type="submission" date="2006-04" db="EMBL/GenBank/DDBJ databases">
        <title>Complete sequence of chromosome of Deinococcus geothermalis DSM 11300.</title>
        <authorList>
            <person name="Copeland A."/>
            <person name="Lucas S."/>
            <person name="Lapidus A."/>
            <person name="Barry K."/>
            <person name="Detter J.C."/>
            <person name="Glavina del Rio T."/>
            <person name="Hammon N."/>
            <person name="Israni S."/>
            <person name="Dalin E."/>
            <person name="Tice H."/>
            <person name="Pitluck S."/>
            <person name="Brettin T."/>
            <person name="Bruce D."/>
            <person name="Han C."/>
            <person name="Tapia R."/>
            <person name="Saunders E."/>
            <person name="Gilna P."/>
            <person name="Schmutz J."/>
            <person name="Larimer F."/>
            <person name="Land M."/>
            <person name="Hauser L."/>
            <person name="Kyrpides N."/>
            <person name="Kim E."/>
            <person name="Daly M.J."/>
            <person name="Fredrickson J.K."/>
            <person name="Makarova K.S."/>
            <person name="Gaidamakova E.K."/>
            <person name="Zhai M."/>
            <person name="Richardson P."/>
        </authorList>
    </citation>
    <scope>NUCLEOTIDE SEQUENCE [LARGE SCALE GENOMIC DNA]</scope>
    <source>
        <strain>DSM 11300 / CIP 105573 / AG-3a</strain>
    </source>
</reference>